<sequence>MHSHHSHSGDYSAHGTDPLDSVVDQVVNLNFHTYCLTEHIPRIEAKFIYPEEQSLGKNPEEVITKLETSFKNFMSHAQEIKTRYADRPDVRTKFIIGMEIESCDMAHIEYAKRLMKENNDILKFCVGSVHHVNGIPIDFDQQQWYNSLHSFNDNLKHFLLSYFQSQYEMLINIKPLVVGHFDLYKLFLPNDMLVNQKSGNCNEETGVPVASLDVISEWPEIYDAVVRNLQFIDSYGGAIEINTSALRKRLEEPYPSKTLCNLVKKHCGSRFVLSDDAHGVAQVGVCYDKVKKYIVDVLQLEYICYLEESQSPENLLTVKRLPISQFVNDPFWANI</sequence>
<comment type="catalytic activity">
    <reaction>
        <text>L-histidinol phosphate + H2O = L-histidinol + phosphate</text>
        <dbReference type="Rhea" id="RHEA:14465"/>
        <dbReference type="ChEBI" id="CHEBI:15377"/>
        <dbReference type="ChEBI" id="CHEBI:43474"/>
        <dbReference type="ChEBI" id="CHEBI:57699"/>
        <dbReference type="ChEBI" id="CHEBI:57980"/>
        <dbReference type="EC" id="3.1.3.15"/>
    </reaction>
</comment>
<comment type="pathway">
    <text>Amino-acid biosynthesis; L-histidine biosynthesis; L-histidine from 5-phospho-alpha-D-ribose 1-diphosphate: step 8/9.</text>
</comment>
<comment type="miscellaneous">
    <text evidence="1">Present with 4280 molecules/cell in log phase SD medium.</text>
</comment>
<comment type="similarity">
    <text evidence="2">Belongs to the PHP hydrolase family. HisK subfamily.</text>
</comment>
<name>HIS9_YEAST</name>
<dbReference type="EC" id="3.1.3.15"/>
<dbReference type="EMBL" id="U09479">
    <property type="protein sequence ID" value="AAA18399.1"/>
    <property type="molecule type" value="Unassigned_DNA"/>
</dbReference>
<dbReference type="EMBL" id="D50617">
    <property type="protein sequence ID" value="BAA09264.1"/>
    <property type="molecule type" value="Genomic_DNA"/>
</dbReference>
<dbReference type="EMBL" id="BK006940">
    <property type="protein sequence ID" value="DAA12465.1"/>
    <property type="molecule type" value="Genomic_DNA"/>
</dbReference>
<dbReference type="PIR" id="S56280">
    <property type="entry name" value="S56280"/>
</dbReference>
<dbReference type="RefSeq" id="NP_116681.1">
    <property type="nucleotide sequence ID" value="NM_001179990.1"/>
</dbReference>
<dbReference type="SMR" id="P38635"/>
<dbReference type="BioGRID" id="31178">
    <property type="interactions" value="12"/>
</dbReference>
<dbReference type="FunCoup" id="P38635">
    <property type="interactions" value="179"/>
</dbReference>
<dbReference type="IntAct" id="P38635">
    <property type="interactions" value="2"/>
</dbReference>
<dbReference type="MINT" id="P38635"/>
<dbReference type="STRING" id="4932.YFR025C"/>
<dbReference type="iPTMnet" id="P38635"/>
<dbReference type="PaxDb" id="4932-YFR025C"/>
<dbReference type="PeptideAtlas" id="P38635"/>
<dbReference type="EnsemblFungi" id="YFR025C_mRNA">
    <property type="protein sequence ID" value="YFR025C"/>
    <property type="gene ID" value="YFR025C"/>
</dbReference>
<dbReference type="GeneID" id="850581"/>
<dbReference type="KEGG" id="sce:YFR025C"/>
<dbReference type="AGR" id="SGD:S000001921"/>
<dbReference type="SGD" id="S000001921">
    <property type="gene designation" value="HIS2"/>
</dbReference>
<dbReference type="VEuPathDB" id="FungiDB:YFR025C"/>
<dbReference type="eggNOG" id="ENOG502RXUQ">
    <property type="taxonomic scope" value="Eukaryota"/>
</dbReference>
<dbReference type="HOGENOM" id="CLU_054611_0_1_1"/>
<dbReference type="InParanoid" id="P38635"/>
<dbReference type="OMA" id="DYDRPMY"/>
<dbReference type="OrthoDB" id="5957391at2759"/>
<dbReference type="BioCyc" id="YEAST:YFR025C-MONOMER"/>
<dbReference type="UniPathway" id="UPA00031">
    <property type="reaction ID" value="UER00013"/>
</dbReference>
<dbReference type="BioGRID-ORCS" id="850581">
    <property type="hits" value="4 hits in 10 CRISPR screens"/>
</dbReference>
<dbReference type="PRO" id="PR:P38635"/>
<dbReference type="Proteomes" id="UP000002311">
    <property type="component" value="Chromosome VI"/>
</dbReference>
<dbReference type="RNAct" id="P38635">
    <property type="molecule type" value="protein"/>
</dbReference>
<dbReference type="GO" id="GO:0005737">
    <property type="term" value="C:cytoplasm"/>
    <property type="evidence" value="ECO:0007005"/>
    <property type="project" value="SGD"/>
</dbReference>
<dbReference type="GO" id="GO:0004401">
    <property type="term" value="F:histidinol-phosphatase activity"/>
    <property type="evidence" value="ECO:0000315"/>
    <property type="project" value="SGD"/>
</dbReference>
<dbReference type="GO" id="GO:0000105">
    <property type="term" value="P:L-histidine biosynthetic process"/>
    <property type="evidence" value="ECO:0000315"/>
    <property type="project" value="SGD"/>
</dbReference>
<dbReference type="CDD" id="cd12110">
    <property type="entry name" value="PHP_HisPPase_Hisj_like"/>
    <property type="match status" value="1"/>
</dbReference>
<dbReference type="FunFam" id="3.20.20.140:FF:000088">
    <property type="entry name" value="Histidinol-phosphatase"/>
    <property type="match status" value="1"/>
</dbReference>
<dbReference type="Gene3D" id="3.20.20.140">
    <property type="entry name" value="Metal-dependent hydrolases"/>
    <property type="match status" value="1"/>
</dbReference>
<dbReference type="InterPro" id="IPR010140">
    <property type="entry name" value="Histidinol_P_phosphatase_HisJ"/>
</dbReference>
<dbReference type="InterPro" id="IPR004013">
    <property type="entry name" value="PHP_dom"/>
</dbReference>
<dbReference type="InterPro" id="IPR016195">
    <property type="entry name" value="Pol/histidinol_Pase-like"/>
</dbReference>
<dbReference type="NCBIfam" id="TIGR01856">
    <property type="entry name" value="hisJ_fam"/>
    <property type="match status" value="1"/>
</dbReference>
<dbReference type="PANTHER" id="PTHR21039">
    <property type="entry name" value="HISTIDINOL PHOSPHATASE-RELATED"/>
    <property type="match status" value="1"/>
</dbReference>
<dbReference type="PANTHER" id="PTHR21039:SF0">
    <property type="entry name" value="HISTIDINOL-PHOSPHATASE"/>
    <property type="match status" value="1"/>
</dbReference>
<dbReference type="Pfam" id="PF02811">
    <property type="entry name" value="PHP"/>
    <property type="match status" value="1"/>
</dbReference>
<dbReference type="SUPFAM" id="SSF89550">
    <property type="entry name" value="PHP domain-like"/>
    <property type="match status" value="1"/>
</dbReference>
<organism>
    <name type="scientific">Saccharomyces cerevisiae (strain ATCC 204508 / S288c)</name>
    <name type="common">Baker's yeast</name>
    <dbReference type="NCBI Taxonomy" id="559292"/>
    <lineage>
        <taxon>Eukaryota</taxon>
        <taxon>Fungi</taxon>
        <taxon>Dikarya</taxon>
        <taxon>Ascomycota</taxon>
        <taxon>Saccharomycotina</taxon>
        <taxon>Saccharomycetes</taxon>
        <taxon>Saccharomycetales</taxon>
        <taxon>Saccharomycetaceae</taxon>
        <taxon>Saccharomyces</taxon>
    </lineage>
</organism>
<gene>
    <name type="primary">HIS2</name>
    <name type="ordered locus">YFR025C</name>
</gene>
<evidence type="ECO:0000269" key="1">
    <source>
    </source>
</evidence>
<evidence type="ECO:0000305" key="2"/>
<proteinExistence type="evidence at protein level"/>
<keyword id="KW-0028">Amino-acid biosynthesis</keyword>
<keyword id="KW-0368">Histidine biosynthesis</keyword>
<keyword id="KW-0378">Hydrolase</keyword>
<keyword id="KW-1185">Reference proteome</keyword>
<reference key="1">
    <citation type="journal article" date="1994" name="Genetics">
        <title>Analysis of a recombination hotspot for gene conversion occurring at the HIS2 gene of Saccharomyces cerevisiae.</title>
        <authorList>
            <person name="Malone R.E."/>
            <person name="Kim S."/>
            <person name="Bullard S.A."/>
            <person name="Lundquist S."/>
            <person name="Hutchings-Crow L."/>
            <person name="Cramton S."/>
            <person name="Lutfiyya L."/>
            <person name="Lee J."/>
        </authorList>
    </citation>
    <scope>NUCLEOTIDE SEQUENCE</scope>
</reference>
<reference key="2">
    <citation type="journal article" date="1996" name="Yeast">
        <title>Fifteen open reading frames in a 30.8 kb region of the right arm of chromosome VI from Saccharomyces cerevisiae.</title>
        <authorList>
            <person name="Eki T."/>
            <person name="Naitou M."/>
            <person name="Hagiwara H."/>
            <person name="Abe M."/>
            <person name="Ozawa M."/>
            <person name="Sasanuma S."/>
            <person name="Sasanuma M."/>
            <person name="Tsuchiya Y."/>
            <person name="Shibata T."/>
            <person name="Watanabe K."/>
            <person name="Ono A."/>
            <person name="Yamazaki M."/>
            <person name="Tashiro H."/>
            <person name="Hanaoka F."/>
            <person name="Murakami Y."/>
        </authorList>
    </citation>
    <scope>NUCLEOTIDE SEQUENCE [GENOMIC DNA]</scope>
    <source>
        <strain>ATCC 204511 / S288c / AB972</strain>
    </source>
</reference>
<reference key="3">
    <citation type="journal article" date="1995" name="Nat. Genet.">
        <title>Analysis of the nucleotide sequence of chromosome VI from Saccharomyces cerevisiae.</title>
        <authorList>
            <person name="Murakami Y."/>
            <person name="Naitou M."/>
            <person name="Hagiwara H."/>
            <person name="Shibata T."/>
            <person name="Ozawa M."/>
            <person name="Sasanuma S."/>
            <person name="Sasanuma M."/>
            <person name="Tsuchiya Y."/>
            <person name="Soeda E."/>
            <person name="Yokoyama K."/>
            <person name="Yamazaki M."/>
            <person name="Tashiro H."/>
            <person name="Eki T."/>
        </authorList>
    </citation>
    <scope>NUCLEOTIDE SEQUENCE [LARGE SCALE GENOMIC DNA]</scope>
    <source>
        <strain>ATCC 204508 / S288c</strain>
    </source>
</reference>
<reference key="4">
    <citation type="journal article" date="2014" name="G3 (Bethesda)">
        <title>The reference genome sequence of Saccharomyces cerevisiae: Then and now.</title>
        <authorList>
            <person name="Engel S.R."/>
            <person name="Dietrich F.S."/>
            <person name="Fisk D.G."/>
            <person name="Binkley G."/>
            <person name="Balakrishnan R."/>
            <person name="Costanzo M.C."/>
            <person name="Dwight S.S."/>
            <person name="Hitz B.C."/>
            <person name="Karra K."/>
            <person name="Nash R.S."/>
            <person name="Weng S."/>
            <person name="Wong E.D."/>
            <person name="Lloyd P."/>
            <person name="Skrzypek M.S."/>
            <person name="Miyasato S.R."/>
            <person name="Simison M."/>
            <person name="Cherry J.M."/>
        </authorList>
    </citation>
    <scope>GENOME REANNOTATION</scope>
    <source>
        <strain>ATCC 204508 / S288c</strain>
    </source>
</reference>
<reference key="5">
    <citation type="journal article" date="2003" name="Nature">
        <title>Global analysis of protein expression in yeast.</title>
        <authorList>
            <person name="Ghaemmaghami S."/>
            <person name="Huh W.-K."/>
            <person name="Bower K."/>
            <person name="Howson R.W."/>
            <person name="Belle A."/>
            <person name="Dephoure N."/>
            <person name="O'Shea E.K."/>
            <person name="Weissman J.S."/>
        </authorList>
    </citation>
    <scope>LEVEL OF PROTEIN EXPRESSION [LARGE SCALE ANALYSIS]</scope>
</reference>
<feature type="chain" id="PRO_0000122322" description="Histidinol-phosphatase">
    <location>
        <begin position="1"/>
        <end position="335"/>
    </location>
</feature>
<feature type="sequence conflict" description="In Ref. 1; AAA18399." evidence="2" ref="1">
    <original>N</original>
    <variation>H</variation>
    <location>
        <position position="30"/>
    </location>
</feature>
<feature type="sequence conflict" description="In Ref. 1; AAA18399." evidence="2" ref="1">
    <original>D</original>
    <variation>H</variation>
    <location>
        <position position="191"/>
    </location>
</feature>
<feature type="sequence conflict" description="In Ref. 1; AAA18399." evidence="2" ref="1">
    <original>N</original>
    <variation>H</variation>
    <location>
        <position position="195"/>
    </location>
</feature>
<protein>
    <recommendedName>
        <fullName>Histidinol-phosphatase</fullName>
        <shortName>HolPase</shortName>
        <ecNumber>3.1.3.15</ecNumber>
    </recommendedName>
</protein>
<accession>P38635</accession>
<accession>D6VTQ5</accession>